<organism>
    <name type="scientific">Escherichia coli O139:H28 (strain E24377A / ETEC)</name>
    <dbReference type="NCBI Taxonomy" id="331111"/>
    <lineage>
        <taxon>Bacteria</taxon>
        <taxon>Pseudomonadati</taxon>
        <taxon>Pseudomonadota</taxon>
        <taxon>Gammaproteobacteria</taxon>
        <taxon>Enterobacterales</taxon>
        <taxon>Enterobacteriaceae</taxon>
        <taxon>Escherichia</taxon>
    </lineage>
</organism>
<dbReference type="EC" id="1.11.1.21" evidence="1"/>
<dbReference type="EMBL" id="CP000800">
    <property type="protein sequence ID" value="ABV20076.1"/>
    <property type="molecule type" value="Genomic_DNA"/>
</dbReference>
<dbReference type="RefSeq" id="WP_001297636.1">
    <property type="nucleotide sequence ID" value="NC_009801.1"/>
</dbReference>
<dbReference type="SMR" id="A7ZUG1"/>
<dbReference type="GeneID" id="75203227"/>
<dbReference type="KEGG" id="ecw:EcE24377A_4482"/>
<dbReference type="HOGENOM" id="CLU_025424_2_0_6"/>
<dbReference type="Proteomes" id="UP000001122">
    <property type="component" value="Chromosome"/>
</dbReference>
<dbReference type="GO" id="GO:0005829">
    <property type="term" value="C:cytosol"/>
    <property type="evidence" value="ECO:0007669"/>
    <property type="project" value="TreeGrafter"/>
</dbReference>
<dbReference type="GO" id="GO:0004096">
    <property type="term" value="F:catalase activity"/>
    <property type="evidence" value="ECO:0007669"/>
    <property type="project" value="UniProtKB-UniRule"/>
</dbReference>
<dbReference type="GO" id="GO:0020037">
    <property type="term" value="F:heme binding"/>
    <property type="evidence" value="ECO:0007669"/>
    <property type="project" value="InterPro"/>
</dbReference>
<dbReference type="GO" id="GO:0046872">
    <property type="term" value="F:metal ion binding"/>
    <property type="evidence" value="ECO:0007669"/>
    <property type="project" value="UniProtKB-KW"/>
</dbReference>
<dbReference type="GO" id="GO:0070301">
    <property type="term" value="P:cellular response to hydrogen peroxide"/>
    <property type="evidence" value="ECO:0007669"/>
    <property type="project" value="TreeGrafter"/>
</dbReference>
<dbReference type="GO" id="GO:0042744">
    <property type="term" value="P:hydrogen peroxide catabolic process"/>
    <property type="evidence" value="ECO:0007669"/>
    <property type="project" value="UniProtKB-KW"/>
</dbReference>
<dbReference type="CDD" id="cd08200">
    <property type="entry name" value="catalase_peroxidase_2"/>
    <property type="match status" value="1"/>
</dbReference>
<dbReference type="FunFam" id="1.10.420.10:FF:000002">
    <property type="entry name" value="Catalase-peroxidase"/>
    <property type="match status" value="1"/>
</dbReference>
<dbReference type="FunFam" id="1.10.420.10:FF:000004">
    <property type="entry name" value="Catalase-peroxidase"/>
    <property type="match status" value="1"/>
</dbReference>
<dbReference type="FunFam" id="1.10.520.10:FF:000002">
    <property type="entry name" value="Catalase-peroxidase"/>
    <property type="match status" value="1"/>
</dbReference>
<dbReference type="Gene3D" id="1.10.520.10">
    <property type="match status" value="2"/>
</dbReference>
<dbReference type="Gene3D" id="1.10.420.10">
    <property type="entry name" value="Peroxidase, domain 2"/>
    <property type="match status" value="2"/>
</dbReference>
<dbReference type="HAMAP" id="MF_01961">
    <property type="entry name" value="Catal_peroxid"/>
    <property type="match status" value="1"/>
</dbReference>
<dbReference type="InterPro" id="IPR000763">
    <property type="entry name" value="Catalase_peroxidase"/>
</dbReference>
<dbReference type="InterPro" id="IPR002016">
    <property type="entry name" value="Haem_peroxidase"/>
</dbReference>
<dbReference type="InterPro" id="IPR010255">
    <property type="entry name" value="Haem_peroxidase_sf"/>
</dbReference>
<dbReference type="InterPro" id="IPR019794">
    <property type="entry name" value="Peroxidases_AS"/>
</dbReference>
<dbReference type="InterPro" id="IPR019793">
    <property type="entry name" value="Peroxidases_heam-ligand_BS"/>
</dbReference>
<dbReference type="NCBIfam" id="TIGR00198">
    <property type="entry name" value="cat_per_HPI"/>
    <property type="match status" value="1"/>
</dbReference>
<dbReference type="NCBIfam" id="NF011635">
    <property type="entry name" value="PRK15061.1"/>
    <property type="match status" value="1"/>
</dbReference>
<dbReference type="PANTHER" id="PTHR30555:SF0">
    <property type="entry name" value="CATALASE-PEROXIDASE"/>
    <property type="match status" value="1"/>
</dbReference>
<dbReference type="PANTHER" id="PTHR30555">
    <property type="entry name" value="HYDROPEROXIDASE I, BIFUNCTIONAL CATALASE-PEROXIDASE"/>
    <property type="match status" value="1"/>
</dbReference>
<dbReference type="Pfam" id="PF00141">
    <property type="entry name" value="peroxidase"/>
    <property type="match status" value="2"/>
</dbReference>
<dbReference type="PRINTS" id="PR00460">
    <property type="entry name" value="BPEROXIDASE"/>
</dbReference>
<dbReference type="PRINTS" id="PR00458">
    <property type="entry name" value="PEROXIDASE"/>
</dbReference>
<dbReference type="SUPFAM" id="SSF48113">
    <property type="entry name" value="Heme-dependent peroxidases"/>
    <property type="match status" value="2"/>
</dbReference>
<dbReference type="PROSITE" id="PS00435">
    <property type="entry name" value="PEROXIDASE_1"/>
    <property type="match status" value="1"/>
</dbReference>
<dbReference type="PROSITE" id="PS00436">
    <property type="entry name" value="PEROXIDASE_2"/>
    <property type="match status" value="1"/>
</dbReference>
<dbReference type="PROSITE" id="PS50873">
    <property type="entry name" value="PEROXIDASE_4"/>
    <property type="match status" value="1"/>
</dbReference>
<gene>
    <name evidence="1" type="primary">katG</name>
    <name type="ordered locus">EcE24377A_4482</name>
</gene>
<name>KATG_ECO24</name>
<keyword id="KW-0349">Heme</keyword>
<keyword id="KW-0376">Hydrogen peroxide</keyword>
<keyword id="KW-0408">Iron</keyword>
<keyword id="KW-0479">Metal-binding</keyword>
<keyword id="KW-0560">Oxidoreductase</keyword>
<keyword id="KW-0575">Peroxidase</keyword>
<keyword id="KW-1185">Reference proteome</keyword>
<sequence>MSTSDDIHNTTATGKCPFHQGGHDQSAGAGTTTRDWWPNQLRVDLLNQHSNRSNPLGEDFDYRKEFSKLDYYGLKKDLKALLTESQPWWPADWGSYAGLFIRMAWHGAGTYRSIDGRGGAGRGQQRFAPLNSWPDNVSLDKARRLLWPIKQKYGQKISWADLFILAGNVALENSGFRTFGFGAGREDVWEPDLDVNWGDEKAWLTHRHPEALAKAPLGATEMGLIYVNPEGPDHSGEPLSAAAAIRATFGNMGMNDEETVALIAGGHTLGKTHGAGPTSNVGPDPEAAPIEEQGLGWASTYGSGVGADAITSGLEVVWTQTPTQWSNYFFENLFKYEWVQTRSPAGAIQFEAVDAPEIIPDPFDPSKKRKPTMLVTDLTLRFDPEFEKISRRFLNDPQAFNEAFARAWFKLTHRDMGPKSRYIGPEVPKEDLIWQDPLPQPIYNPTEQDIIDLKFAIADSGLSVSELVSVAWASASTFRGGDKRGGANGARLALMPQRDWDVNAAAVRALPVLEKIQKESGKASLADIIVLAGVVGVEKAASAAGLSIHVPFAPGRVDARQDQTDIEMFELLEPIADGFRNYRARLDVSTTESLLIDKAQQLTLTAPEMTALVGGMRVLGANFDGSKNGVFTDRVGVLSNDFFVNLLDMRYEWKATDESKELFEGRDRETGEVKYTASRADLVFGSNSVLRAVAEVYASSDAHEKFVKDFVAAWVKVMNLDRFDLL</sequence>
<feature type="chain" id="PRO_0000354780" description="Catalase-peroxidase">
    <location>
        <begin position="1"/>
        <end position="726"/>
    </location>
</feature>
<feature type="region of interest" description="Disordered" evidence="2">
    <location>
        <begin position="1"/>
        <end position="33"/>
    </location>
</feature>
<feature type="active site" description="Proton acceptor" evidence="1">
    <location>
        <position position="106"/>
    </location>
</feature>
<feature type="binding site" description="axial binding residue" evidence="1">
    <location>
        <position position="267"/>
    </location>
    <ligand>
        <name>heme b</name>
        <dbReference type="ChEBI" id="CHEBI:60344"/>
    </ligand>
    <ligandPart>
        <name>Fe</name>
        <dbReference type="ChEBI" id="CHEBI:18248"/>
    </ligandPart>
</feature>
<feature type="site" description="Transition state stabilizer" evidence="1">
    <location>
        <position position="102"/>
    </location>
</feature>
<feature type="cross-link" description="Tryptophyl-tyrosyl-methioninium (Trp-Tyr) (with M-252)" evidence="1">
    <location>
        <begin position="105"/>
        <end position="226"/>
    </location>
</feature>
<feature type="cross-link" description="Tryptophyl-tyrosyl-methioninium (Tyr-Met) (with W-105)" evidence="1">
    <location>
        <begin position="226"/>
        <end position="252"/>
    </location>
</feature>
<proteinExistence type="inferred from homology"/>
<reference key="1">
    <citation type="journal article" date="2008" name="J. Bacteriol.">
        <title>The pangenome structure of Escherichia coli: comparative genomic analysis of E. coli commensal and pathogenic isolates.</title>
        <authorList>
            <person name="Rasko D.A."/>
            <person name="Rosovitz M.J."/>
            <person name="Myers G.S.A."/>
            <person name="Mongodin E.F."/>
            <person name="Fricke W.F."/>
            <person name="Gajer P."/>
            <person name="Crabtree J."/>
            <person name="Sebaihia M."/>
            <person name="Thomson N.R."/>
            <person name="Chaudhuri R."/>
            <person name="Henderson I.R."/>
            <person name="Sperandio V."/>
            <person name="Ravel J."/>
        </authorList>
    </citation>
    <scope>NUCLEOTIDE SEQUENCE [LARGE SCALE GENOMIC DNA]</scope>
    <source>
        <strain>E24377A / ETEC</strain>
    </source>
</reference>
<protein>
    <recommendedName>
        <fullName evidence="1">Catalase-peroxidase</fullName>
        <shortName evidence="1">CP</shortName>
        <ecNumber evidence="1">1.11.1.21</ecNumber>
    </recommendedName>
    <alternativeName>
        <fullName evidence="1">Peroxidase/catalase</fullName>
    </alternativeName>
</protein>
<accession>A7ZUG1</accession>
<comment type="function">
    <text evidence="1">Bifunctional enzyme with both catalase and broad-spectrum peroxidase activity.</text>
</comment>
<comment type="catalytic activity">
    <reaction evidence="1">
        <text>H2O2 + AH2 = A + 2 H2O</text>
        <dbReference type="Rhea" id="RHEA:30275"/>
        <dbReference type="ChEBI" id="CHEBI:13193"/>
        <dbReference type="ChEBI" id="CHEBI:15377"/>
        <dbReference type="ChEBI" id="CHEBI:16240"/>
        <dbReference type="ChEBI" id="CHEBI:17499"/>
        <dbReference type="EC" id="1.11.1.21"/>
    </reaction>
</comment>
<comment type="catalytic activity">
    <reaction evidence="1">
        <text>2 H2O2 = O2 + 2 H2O</text>
        <dbReference type="Rhea" id="RHEA:20309"/>
        <dbReference type="ChEBI" id="CHEBI:15377"/>
        <dbReference type="ChEBI" id="CHEBI:15379"/>
        <dbReference type="ChEBI" id="CHEBI:16240"/>
        <dbReference type="EC" id="1.11.1.21"/>
    </reaction>
</comment>
<comment type="cofactor">
    <cofactor evidence="1">
        <name>heme b</name>
        <dbReference type="ChEBI" id="CHEBI:60344"/>
    </cofactor>
    <text evidence="1">Binds 1 heme b (iron(II)-protoporphyrin IX) group per dimer.</text>
</comment>
<comment type="subunit">
    <text evidence="1">Homodimer or homotetramer.</text>
</comment>
<comment type="PTM">
    <text evidence="1">Formation of the three residue Trp-Tyr-Met cross-link is important for the catalase, but not the peroxidase activity of the enzyme.</text>
</comment>
<comment type="similarity">
    <text evidence="1">Belongs to the peroxidase family. Peroxidase/catalase subfamily.</text>
</comment>
<evidence type="ECO:0000255" key="1">
    <source>
        <dbReference type="HAMAP-Rule" id="MF_01961"/>
    </source>
</evidence>
<evidence type="ECO:0000256" key="2">
    <source>
        <dbReference type="SAM" id="MobiDB-lite"/>
    </source>
</evidence>